<feature type="chain" id="PRO_0000286435" description="ER membrane protein complex subunit 5">
    <location>
        <begin position="1"/>
        <end position="131"/>
    </location>
</feature>
<feature type="topological domain" description="Cytoplasmic" evidence="6">
    <location>
        <begin position="1"/>
        <end position="3"/>
    </location>
</feature>
<feature type="transmembrane region" description="Helical" evidence="6">
    <location>
        <begin position="4"/>
        <end position="22"/>
    </location>
</feature>
<feature type="topological domain" description="Lumenal" evidence="6">
    <location>
        <begin position="23"/>
        <end position="43"/>
    </location>
</feature>
<feature type="transmembrane region" description="Helical" evidence="6">
    <location>
        <begin position="44"/>
        <end position="63"/>
    </location>
</feature>
<feature type="topological domain" description="Cytoplasmic" evidence="6">
    <location>
        <begin position="64"/>
        <end position="131"/>
    </location>
</feature>
<feature type="modified residue" description="Phosphoserine" evidence="15">
    <location>
        <position position="120"/>
    </location>
</feature>
<feature type="splice variant" id="VSP_036488" description="In isoform 2." evidence="8">
    <original>M</original>
    <variation>MTPLGSGPPREASIAQPSGFSTTETLCAQDFSDVIFLRRADTRRWKKKQLRRPSLLLLGCCSFGIM</variation>
    <location>
        <position position="1"/>
    </location>
</feature>
<feature type="helix" evidence="17">
    <location>
        <begin position="3"/>
        <end position="33"/>
    </location>
</feature>
<feature type="strand" evidence="17">
    <location>
        <begin position="34"/>
        <end position="36"/>
    </location>
</feature>
<feature type="helix" evidence="17">
    <location>
        <begin position="43"/>
        <end position="63"/>
    </location>
</feature>
<feature type="strand" evidence="17">
    <location>
        <begin position="70"/>
        <end position="74"/>
    </location>
</feature>
<feature type="helix" evidence="17">
    <location>
        <begin position="75"/>
        <end position="77"/>
    </location>
</feature>
<feature type="helix" evidence="17">
    <location>
        <begin position="81"/>
        <end position="85"/>
    </location>
</feature>
<feature type="helix" evidence="16">
    <location>
        <begin position="88"/>
        <end position="90"/>
    </location>
</feature>
<feature type="helix" evidence="17">
    <location>
        <begin position="96"/>
        <end position="101"/>
    </location>
</feature>
<reference key="1">
    <citation type="journal article" date="2004" name="Nat. Genet.">
        <title>Complete sequencing and characterization of 21,243 full-length human cDNAs.</title>
        <authorList>
            <person name="Ota T."/>
            <person name="Suzuki Y."/>
            <person name="Nishikawa T."/>
            <person name="Otsuki T."/>
            <person name="Sugiyama T."/>
            <person name="Irie R."/>
            <person name="Wakamatsu A."/>
            <person name="Hayashi K."/>
            <person name="Sato H."/>
            <person name="Nagai K."/>
            <person name="Kimura K."/>
            <person name="Makita H."/>
            <person name="Sekine M."/>
            <person name="Obayashi M."/>
            <person name="Nishi T."/>
            <person name="Shibahara T."/>
            <person name="Tanaka T."/>
            <person name="Ishii S."/>
            <person name="Yamamoto J."/>
            <person name="Saito K."/>
            <person name="Kawai Y."/>
            <person name="Isono Y."/>
            <person name="Nakamura Y."/>
            <person name="Nagahari K."/>
            <person name="Murakami K."/>
            <person name="Yasuda T."/>
            <person name="Iwayanagi T."/>
            <person name="Wagatsuma M."/>
            <person name="Shiratori A."/>
            <person name="Sudo H."/>
            <person name="Hosoiri T."/>
            <person name="Kaku Y."/>
            <person name="Kodaira H."/>
            <person name="Kondo H."/>
            <person name="Sugawara M."/>
            <person name="Takahashi M."/>
            <person name="Kanda K."/>
            <person name="Yokoi T."/>
            <person name="Furuya T."/>
            <person name="Kikkawa E."/>
            <person name="Omura Y."/>
            <person name="Abe K."/>
            <person name="Kamihara K."/>
            <person name="Katsuta N."/>
            <person name="Sato K."/>
            <person name="Tanikawa M."/>
            <person name="Yamazaki M."/>
            <person name="Ninomiya K."/>
            <person name="Ishibashi T."/>
            <person name="Yamashita H."/>
            <person name="Murakawa K."/>
            <person name="Fujimori K."/>
            <person name="Tanai H."/>
            <person name="Kimata M."/>
            <person name="Watanabe M."/>
            <person name="Hiraoka S."/>
            <person name="Chiba Y."/>
            <person name="Ishida S."/>
            <person name="Ono Y."/>
            <person name="Takiguchi S."/>
            <person name="Watanabe S."/>
            <person name="Yosida M."/>
            <person name="Hotuta T."/>
            <person name="Kusano J."/>
            <person name="Kanehori K."/>
            <person name="Takahashi-Fujii A."/>
            <person name="Hara H."/>
            <person name="Tanase T.-O."/>
            <person name="Nomura Y."/>
            <person name="Togiya S."/>
            <person name="Komai F."/>
            <person name="Hara R."/>
            <person name="Takeuchi K."/>
            <person name="Arita M."/>
            <person name="Imose N."/>
            <person name="Musashino K."/>
            <person name="Yuuki H."/>
            <person name="Oshima A."/>
            <person name="Sasaki N."/>
            <person name="Aotsuka S."/>
            <person name="Yoshikawa Y."/>
            <person name="Matsunawa H."/>
            <person name="Ichihara T."/>
            <person name="Shiohata N."/>
            <person name="Sano S."/>
            <person name="Moriya S."/>
            <person name="Momiyama H."/>
            <person name="Satoh N."/>
            <person name="Takami S."/>
            <person name="Terashima Y."/>
            <person name="Suzuki O."/>
            <person name="Nakagawa S."/>
            <person name="Senoh A."/>
            <person name="Mizoguchi H."/>
            <person name="Goto Y."/>
            <person name="Shimizu F."/>
            <person name="Wakebe H."/>
            <person name="Hishigaki H."/>
            <person name="Watanabe T."/>
            <person name="Sugiyama A."/>
            <person name="Takemoto M."/>
            <person name="Kawakami B."/>
            <person name="Yamazaki M."/>
            <person name="Watanabe K."/>
            <person name="Kumagai A."/>
            <person name="Itakura S."/>
            <person name="Fukuzumi Y."/>
            <person name="Fujimori Y."/>
            <person name="Komiyama M."/>
            <person name="Tashiro H."/>
            <person name="Tanigami A."/>
            <person name="Fujiwara T."/>
            <person name="Ono T."/>
            <person name="Yamada K."/>
            <person name="Fujii Y."/>
            <person name="Ozaki K."/>
            <person name="Hirao M."/>
            <person name="Ohmori Y."/>
            <person name="Kawabata A."/>
            <person name="Hikiji T."/>
            <person name="Kobatake N."/>
            <person name="Inagaki H."/>
            <person name="Ikema Y."/>
            <person name="Okamoto S."/>
            <person name="Okitani R."/>
            <person name="Kawakami T."/>
            <person name="Noguchi S."/>
            <person name="Itoh T."/>
            <person name="Shigeta K."/>
            <person name="Senba T."/>
            <person name="Matsumura K."/>
            <person name="Nakajima Y."/>
            <person name="Mizuno T."/>
            <person name="Morinaga M."/>
            <person name="Sasaki M."/>
            <person name="Togashi T."/>
            <person name="Oyama M."/>
            <person name="Hata H."/>
            <person name="Watanabe M."/>
            <person name="Komatsu T."/>
            <person name="Mizushima-Sugano J."/>
            <person name="Satoh T."/>
            <person name="Shirai Y."/>
            <person name="Takahashi Y."/>
            <person name="Nakagawa K."/>
            <person name="Okumura K."/>
            <person name="Nagase T."/>
            <person name="Nomura N."/>
            <person name="Kikuchi H."/>
            <person name="Masuho Y."/>
            <person name="Yamashita R."/>
            <person name="Nakai K."/>
            <person name="Yada T."/>
            <person name="Nakamura Y."/>
            <person name="Ohara O."/>
            <person name="Isogai T."/>
            <person name="Sugano S."/>
        </authorList>
    </citation>
    <scope>NUCLEOTIDE SEQUENCE [LARGE SCALE MRNA] (ISOFORMS 1 AND 2)</scope>
    <source>
        <tissue>Brain</tissue>
        <tissue>Hippocampus</tissue>
    </source>
</reference>
<reference key="2">
    <citation type="journal article" date="2005" name="Nature">
        <title>The DNA sequence of the human X chromosome.</title>
        <authorList>
            <person name="Ross M.T."/>
            <person name="Grafham D.V."/>
            <person name="Coffey A.J."/>
            <person name="Scherer S."/>
            <person name="McLay K."/>
            <person name="Muzny D."/>
            <person name="Platzer M."/>
            <person name="Howell G.R."/>
            <person name="Burrows C."/>
            <person name="Bird C.P."/>
            <person name="Frankish A."/>
            <person name="Lovell F.L."/>
            <person name="Howe K.L."/>
            <person name="Ashurst J.L."/>
            <person name="Fulton R.S."/>
            <person name="Sudbrak R."/>
            <person name="Wen G."/>
            <person name="Jones M.C."/>
            <person name="Hurles M.E."/>
            <person name="Andrews T.D."/>
            <person name="Scott C.E."/>
            <person name="Searle S."/>
            <person name="Ramser J."/>
            <person name="Whittaker A."/>
            <person name="Deadman R."/>
            <person name="Carter N.P."/>
            <person name="Hunt S.E."/>
            <person name="Chen R."/>
            <person name="Cree A."/>
            <person name="Gunaratne P."/>
            <person name="Havlak P."/>
            <person name="Hodgson A."/>
            <person name="Metzker M.L."/>
            <person name="Richards S."/>
            <person name="Scott G."/>
            <person name="Steffen D."/>
            <person name="Sodergren E."/>
            <person name="Wheeler D.A."/>
            <person name="Worley K.C."/>
            <person name="Ainscough R."/>
            <person name="Ambrose K.D."/>
            <person name="Ansari-Lari M.A."/>
            <person name="Aradhya S."/>
            <person name="Ashwell R.I."/>
            <person name="Babbage A.K."/>
            <person name="Bagguley C.L."/>
            <person name="Ballabio A."/>
            <person name="Banerjee R."/>
            <person name="Barker G.E."/>
            <person name="Barlow K.F."/>
            <person name="Barrett I.P."/>
            <person name="Bates K.N."/>
            <person name="Beare D.M."/>
            <person name="Beasley H."/>
            <person name="Beasley O."/>
            <person name="Beck A."/>
            <person name="Bethel G."/>
            <person name="Blechschmidt K."/>
            <person name="Brady N."/>
            <person name="Bray-Allen S."/>
            <person name="Bridgeman A.M."/>
            <person name="Brown A.J."/>
            <person name="Brown M.J."/>
            <person name="Bonnin D."/>
            <person name="Bruford E.A."/>
            <person name="Buhay C."/>
            <person name="Burch P."/>
            <person name="Burford D."/>
            <person name="Burgess J."/>
            <person name="Burrill W."/>
            <person name="Burton J."/>
            <person name="Bye J.M."/>
            <person name="Carder C."/>
            <person name="Carrel L."/>
            <person name="Chako J."/>
            <person name="Chapman J.C."/>
            <person name="Chavez D."/>
            <person name="Chen E."/>
            <person name="Chen G."/>
            <person name="Chen Y."/>
            <person name="Chen Z."/>
            <person name="Chinault C."/>
            <person name="Ciccodicola A."/>
            <person name="Clark S.Y."/>
            <person name="Clarke G."/>
            <person name="Clee C.M."/>
            <person name="Clegg S."/>
            <person name="Clerc-Blankenburg K."/>
            <person name="Clifford K."/>
            <person name="Cobley V."/>
            <person name="Cole C.G."/>
            <person name="Conquer J.S."/>
            <person name="Corby N."/>
            <person name="Connor R.E."/>
            <person name="David R."/>
            <person name="Davies J."/>
            <person name="Davis C."/>
            <person name="Davis J."/>
            <person name="Delgado O."/>
            <person name="Deshazo D."/>
            <person name="Dhami P."/>
            <person name="Ding Y."/>
            <person name="Dinh H."/>
            <person name="Dodsworth S."/>
            <person name="Draper H."/>
            <person name="Dugan-Rocha S."/>
            <person name="Dunham A."/>
            <person name="Dunn M."/>
            <person name="Durbin K.J."/>
            <person name="Dutta I."/>
            <person name="Eades T."/>
            <person name="Ellwood M."/>
            <person name="Emery-Cohen A."/>
            <person name="Errington H."/>
            <person name="Evans K.L."/>
            <person name="Faulkner L."/>
            <person name="Francis F."/>
            <person name="Frankland J."/>
            <person name="Fraser A.E."/>
            <person name="Galgoczy P."/>
            <person name="Gilbert J."/>
            <person name="Gill R."/>
            <person name="Gloeckner G."/>
            <person name="Gregory S.G."/>
            <person name="Gribble S."/>
            <person name="Griffiths C."/>
            <person name="Grocock R."/>
            <person name="Gu Y."/>
            <person name="Gwilliam R."/>
            <person name="Hamilton C."/>
            <person name="Hart E.A."/>
            <person name="Hawes A."/>
            <person name="Heath P.D."/>
            <person name="Heitmann K."/>
            <person name="Hennig S."/>
            <person name="Hernandez J."/>
            <person name="Hinzmann B."/>
            <person name="Ho S."/>
            <person name="Hoffs M."/>
            <person name="Howden P.J."/>
            <person name="Huckle E.J."/>
            <person name="Hume J."/>
            <person name="Hunt P.J."/>
            <person name="Hunt A.R."/>
            <person name="Isherwood J."/>
            <person name="Jacob L."/>
            <person name="Johnson D."/>
            <person name="Jones S."/>
            <person name="de Jong P.J."/>
            <person name="Joseph S.S."/>
            <person name="Keenan S."/>
            <person name="Kelly S."/>
            <person name="Kershaw J.K."/>
            <person name="Khan Z."/>
            <person name="Kioschis P."/>
            <person name="Klages S."/>
            <person name="Knights A.J."/>
            <person name="Kosiura A."/>
            <person name="Kovar-Smith C."/>
            <person name="Laird G.K."/>
            <person name="Langford C."/>
            <person name="Lawlor S."/>
            <person name="Leversha M."/>
            <person name="Lewis L."/>
            <person name="Liu W."/>
            <person name="Lloyd C."/>
            <person name="Lloyd D.M."/>
            <person name="Loulseged H."/>
            <person name="Loveland J.E."/>
            <person name="Lovell J.D."/>
            <person name="Lozado R."/>
            <person name="Lu J."/>
            <person name="Lyne R."/>
            <person name="Ma J."/>
            <person name="Maheshwari M."/>
            <person name="Matthews L.H."/>
            <person name="McDowall J."/>
            <person name="McLaren S."/>
            <person name="McMurray A."/>
            <person name="Meidl P."/>
            <person name="Meitinger T."/>
            <person name="Milne S."/>
            <person name="Miner G."/>
            <person name="Mistry S.L."/>
            <person name="Morgan M."/>
            <person name="Morris S."/>
            <person name="Mueller I."/>
            <person name="Mullikin J.C."/>
            <person name="Nguyen N."/>
            <person name="Nordsiek G."/>
            <person name="Nyakatura G."/>
            <person name="O'dell C.N."/>
            <person name="Okwuonu G."/>
            <person name="Palmer S."/>
            <person name="Pandian R."/>
            <person name="Parker D."/>
            <person name="Parrish J."/>
            <person name="Pasternak S."/>
            <person name="Patel D."/>
            <person name="Pearce A.V."/>
            <person name="Pearson D.M."/>
            <person name="Pelan S.E."/>
            <person name="Perez L."/>
            <person name="Porter K.M."/>
            <person name="Ramsey Y."/>
            <person name="Reichwald K."/>
            <person name="Rhodes S."/>
            <person name="Ridler K.A."/>
            <person name="Schlessinger D."/>
            <person name="Schueler M.G."/>
            <person name="Sehra H.K."/>
            <person name="Shaw-Smith C."/>
            <person name="Shen H."/>
            <person name="Sheridan E.M."/>
            <person name="Shownkeen R."/>
            <person name="Skuce C.D."/>
            <person name="Smith M.L."/>
            <person name="Sotheran E.C."/>
            <person name="Steingruber H.E."/>
            <person name="Steward C.A."/>
            <person name="Storey R."/>
            <person name="Swann R.M."/>
            <person name="Swarbreck D."/>
            <person name="Tabor P.E."/>
            <person name="Taudien S."/>
            <person name="Taylor T."/>
            <person name="Teague B."/>
            <person name="Thomas K."/>
            <person name="Thorpe A."/>
            <person name="Timms K."/>
            <person name="Tracey A."/>
            <person name="Trevanion S."/>
            <person name="Tromans A.C."/>
            <person name="d'Urso M."/>
            <person name="Verduzco D."/>
            <person name="Villasana D."/>
            <person name="Waldron L."/>
            <person name="Wall M."/>
            <person name="Wang Q."/>
            <person name="Warren J."/>
            <person name="Warry G.L."/>
            <person name="Wei X."/>
            <person name="West A."/>
            <person name="Whitehead S.L."/>
            <person name="Whiteley M.N."/>
            <person name="Wilkinson J.E."/>
            <person name="Willey D.L."/>
            <person name="Williams G."/>
            <person name="Williams L."/>
            <person name="Williamson A."/>
            <person name="Williamson H."/>
            <person name="Wilming L."/>
            <person name="Woodmansey R.L."/>
            <person name="Wray P.W."/>
            <person name="Yen J."/>
            <person name="Zhang J."/>
            <person name="Zhou J."/>
            <person name="Zoghbi H."/>
            <person name="Zorilla S."/>
            <person name="Buck D."/>
            <person name="Reinhardt R."/>
            <person name="Poustka A."/>
            <person name="Rosenthal A."/>
            <person name="Lehrach H."/>
            <person name="Meindl A."/>
            <person name="Minx P.J."/>
            <person name="Hillier L.W."/>
            <person name="Willard H.F."/>
            <person name="Wilson R.K."/>
            <person name="Waterston R.H."/>
            <person name="Rice C.M."/>
            <person name="Vaudin M."/>
            <person name="Coulson A."/>
            <person name="Nelson D.L."/>
            <person name="Weinstock G."/>
            <person name="Sulston J.E."/>
            <person name="Durbin R.M."/>
            <person name="Hubbard T."/>
            <person name="Gibbs R.A."/>
            <person name="Beck S."/>
            <person name="Rogers J."/>
            <person name="Bentley D.R."/>
        </authorList>
    </citation>
    <scope>NUCLEOTIDE SEQUENCE [LARGE SCALE GENOMIC DNA]</scope>
</reference>
<reference key="3">
    <citation type="submission" date="2005-09" db="EMBL/GenBank/DDBJ databases">
        <authorList>
            <person name="Mural R.J."/>
            <person name="Istrail S."/>
            <person name="Sutton G.G."/>
            <person name="Florea L."/>
            <person name="Halpern A.L."/>
            <person name="Mobarry C.M."/>
            <person name="Lippert R."/>
            <person name="Walenz B."/>
            <person name="Shatkay H."/>
            <person name="Dew I."/>
            <person name="Miller J.R."/>
            <person name="Flanigan M.J."/>
            <person name="Edwards N.J."/>
            <person name="Bolanos R."/>
            <person name="Fasulo D."/>
            <person name="Halldorsson B.V."/>
            <person name="Hannenhalli S."/>
            <person name="Turner R."/>
            <person name="Yooseph S."/>
            <person name="Lu F."/>
            <person name="Nusskern D.R."/>
            <person name="Shue B.C."/>
            <person name="Zheng X.H."/>
            <person name="Zhong F."/>
            <person name="Delcher A.L."/>
            <person name="Huson D.H."/>
            <person name="Kravitz S.A."/>
            <person name="Mouchard L."/>
            <person name="Reinert K."/>
            <person name="Remington K.A."/>
            <person name="Clark A.G."/>
            <person name="Waterman M.S."/>
            <person name="Eichler E.E."/>
            <person name="Adams M.D."/>
            <person name="Hunkapiller M.W."/>
            <person name="Myers E.W."/>
            <person name="Venter J.C."/>
        </authorList>
    </citation>
    <scope>NUCLEOTIDE SEQUENCE [LARGE SCALE GENOMIC DNA]</scope>
</reference>
<reference key="4">
    <citation type="journal article" date="2004" name="Genome Res.">
        <title>The status, quality, and expansion of the NIH full-length cDNA project: the Mammalian Gene Collection (MGC).</title>
        <authorList>
            <consortium name="The MGC Project Team"/>
        </authorList>
    </citation>
    <scope>NUCLEOTIDE SEQUENCE [LARGE SCALE MRNA] (ISOFORM 1)</scope>
    <source>
        <tissue>Blood</tissue>
    </source>
</reference>
<reference key="5">
    <citation type="journal article" date="2008" name="Proc. Natl. Acad. Sci. U.S.A.">
        <title>A quantitative atlas of mitotic phosphorylation.</title>
        <authorList>
            <person name="Dephoure N."/>
            <person name="Zhou C."/>
            <person name="Villen J."/>
            <person name="Beausoleil S.A."/>
            <person name="Bakalarski C.E."/>
            <person name="Elledge S.J."/>
            <person name="Gygi S.P."/>
        </authorList>
    </citation>
    <scope>IDENTIFICATION BY MASS SPECTROMETRY [LARGE SCALE ANALYSIS]</scope>
    <source>
        <tissue>Cervix carcinoma</tissue>
    </source>
</reference>
<reference key="6">
    <citation type="journal article" date="2010" name="Sci. Signal.">
        <title>Quantitative phosphoproteomics reveals widespread full phosphorylation site occupancy during mitosis.</title>
        <authorList>
            <person name="Olsen J.V."/>
            <person name="Vermeulen M."/>
            <person name="Santamaria A."/>
            <person name="Kumar C."/>
            <person name="Miller M.L."/>
            <person name="Jensen L.J."/>
            <person name="Gnad F."/>
            <person name="Cox J."/>
            <person name="Jensen T.S."/>
            <person name="Nigg E.A."/>
            <person name="Brunak S."/>
            <person name="Mann M."/>
        </authorList>
    </citation>
    <scope>IDENTIFICATION BY MASS SPECTROMETRY [LARGE SCALE ANALYSIS]</scope>
    <source>
        <tissue>Cervix carcinoma</tissue>
    </source>
</reference>
<reference key="7">
    <citation type="journal article" date="2011" name="BMC Syst. Biol.">
        <title>Initial characterization of the human central proteome.</title>
        <authorList>
            <person name="Burkard T.R."/>
            <person name="Planyavsky M."/>
            <person name="Kaupe I."/>
            <person name="Breitwieser F.P."/>
            <person name="Buerckstuemmer T."/>
            <person name="Bennett K.L."/>
            <person name="Superti-Furga G."/>
            <person name="Colinge J."/>
        </authorList>
    </citation>
    <scope>IDENTIFICATION BY MASS SPECTROMETRY [LARGE SCALE ANALYSIS]</scope>
</reference>
<reference key="8">
    <citation type="journal article" date="2012" name="Nat. Cell Biol.">
        <title>Defining human ERAD networks through an integrative mapping strategy.</title>
        <authorList>
            <person name="Christianson J.C."/>
            <person name="Olzmann J.A."/>
            <person name="Shaler T.A."/>
            <person name="Sowa M.E."/>
            <person name="Bennett E.J."/>
            <person name="Richter C.M."/>
            <person name="Tyler R.E."/>
            <person name="Greenblatt E.J."/>
            <person name="Harper J.W."/>
            <person name="Kopito R.R."/>
        </authorList>
    </citation>
    <scope>IDENTIFICATION IN THE EMC COMPLEX</scope>
    <scope>SUBCELLULAR LOCATION</scope>
</reference>
<reference key="9">
    <citation type="journal article" date="2013" name="J. Proteome Res.">
        <title>Toward a comprehensive characterization of a human cancer cell phosphoproteome.</title>
        <authorList>
            <person name="Zhou H."/>
            <person name="Di Palma S."/>
            <person name="Preisinger C."/>
            <person name="Peng M."/>
            <person name="Polat A.N."/>
            <person name="Heck A.J."/>
            <person name="Mohammed S."/>
        </authorList>
    </citation>
    <scope>PHOSPHORYLATION [LARGE SCALE ANALYSIS] AT SER-120</scope>
    <scope>IDENTIFICATION BY MASS SPECTROMETRY [LARGE SCALE ANALYSIS]</scope>
    <source>
        <tissue>Cervix carcinoma</tissue>
        <tissue>Erythroleukemia</tissue>
    </source>
</reference>
<reference key="10">
    <citation type="journal article" date="2015" name="Proteomics">
        <title>N-terminome analysis of the human mitochondrial proteome.</title>
        <authorList>
            <person name="Vaca Jacome A.S."/>
            <person name="Rabilloud T."/>
            <person name="Schaeffer-Reiss C."/>
            <person name="Rompais M."/>
            <person name="Ayoub D."/>
            <person name="Lane L."/>
            <person name="Bairoch A."/>
            <person name="Van Dorsselaer A."/>
            <person name="Carapito C."/>
        </authorList>
    </citation>
    <scope>IDENTIFICATION BY MASS SPECTROMETRY [LARGE SCALE ANALYSIS]</scope>
</reference>
<reference key="11">
    <citation type="journal article" date="2018" name="Cell">
        <title>EMC Is Required to Initiate Accurate Membrane Protein Topogenesis.</title>
        <authorList>
            <person name="Chitwood P.J."/>
            <person name="Juszkiewicz S."/>
            <person name="Guna A."/>
            <person name="Shao S."/>
            <person name="Hegde R.S."/>
        </authorList>
    </citation>
    <scope>FUNCTION</scope>
</reference>
<reference key="12">
    <citation type="journal article" date="2018" name="Elife">
        <title>The ER membrane protein complex interacts cotranslationally to enable biogenesis of multipass membrane proteins.</title>
        <authorList>
            <person name="Shurtleff M.J."/>
            <person name="Itzhak D.N."/>
            <person name="Hussmann J.A."/>
            <person name="Schirle Oakdale N.T."/>
            <person name="Costa E.A."/>
            <person name="Jonikas M."/>
            <person name="Weibezahn J."/>
            <person name="Popova K.D."/>
            <person name="Jan C.H."/>
            <person name="Sinitcyn P."/>
            <person name="Vembar S.S."/>
            <person name="Hernandez H."/>
            <person name="Cox J."/>
            <person name="Burlingame A.L."/>
            <person name="Brodsky J.L."/>
            <person name="Frost A."/>
            <person name="Borner G.H."/>
            <person name="Weissman J.S."/>
        </authorList>
    </citation>
    <scope>FUNCTION</scope>
</reference>
<reference key="13">
    <citation type="journal article" date="2018" name="Science">
        <title>The ER membrane protein complex is a transmembrane domain insertase.</title>
        <authorList>
            <person name="Guna A."/>
            <person name="Volkmar N."/>
            <person name="Christianson J.C."/>
            <person name="Hegde R.S."/>
        </authorList>
    </citation>
    <scope>FUNCTION</scope>
    <scope>SUBUNIT</scope>
</reference>
<reference evidence="14" key="14">
    <citation type="journal article" date="2020" name="Elife">
        <title>The architecture of EMC reveals a path for membrane protein insertion.</title>
        <authorList>
            <person name="O'Donnell J.P."/>
            <person name="Phillips B.P."/>
            <person name="Yagita Y."/>
            <person name="Juszkiewicz S."/>
            <person name="Wagner A."/>
            <person name="Malinverni D."/>
            <person name="Keenan R.J."/>
            <person name="Miller E.A."/>
            <person name="Hegde R.S."/>
        </authorList>
    </citation>
    <scope>STRUCTURE BY ELECTRON MICROSCOPY (6.40 ANGSTROMS) OF THE EMC COMPLEX</scope>
    <scope>FUNCTION</scope>
    <scope>TOPOLOGY</scope>
</reference>
<reference evidence="13" key="15">
    <citation type="journal article" date="2020" name="Science">
        <title>Structural basis for membrane insertion by the human ER membrane protein complex.</title>
        <authorList>
            <person name="Pleiner T."/>
            <person name="Tomaleri G.P."/>
            <person name="Januszyk K."/>
            <person name="Inglis A.J."/>
            <person name="Hazu M."/>
            <person name="Voorhees R.M."/>
        </authorList>
    </citation>
    <scope>STRUCTURE BY ELECTRON MICROSCOPY (3.40 ANGSTROMS) OF THE EMC COMPLEX</scope>
    <scope>FUNCTION</scope>
    <scope>TOPOLOGY</scope>
</reference>
<name>EMC5_HUMAN</name>
<dbReference type="EMBL" id="AK295829">
    <property type="protein sequence ID" value="BAG58645.1"/>
    <property type="molecule type" value="mRNA"/>
</dbReference>
<dbReference type="EMBL" id="AK312409">
    <property type="protein sequence ID" value="BAG35322.1"/>
    <property type="molecule type" value="mRNA"/>
</dbReference>
<dbReference type="EMBL" id="AL732579">
    <property type="status" value="NOT_ANNOTATED_CDS"/>
    <property type="molecule type" value="Genomic_DNA"/>
</dbReference>
<dbReference type="EMBL" id="AL953870">
    <property type="status" value="NOT_ANNOTATED_CDS"/>
    <property type="molecule type" value="Genomic_DNA"/>
</dbReference>
<dbReference type="EMBL" id="CH471150">
    <property type="protein sequence ID" value="EAW88483.1"/>
    <property type="molecule type" value="Genomic_DNA"/>
</dbReference>
<dbReference type="EMBL" id="CH471150">
    <property type="protein sequence ID" value="EAW88485.1"/>
    <property type="molecule type" value="Genomic_DNA"/>
</dbReference>
<dbReference type="EMBL" id="BC033588">
    <property type="protein sequence ID" value="AAH33588.1"/>
    <property type="molecule type" value="mRNA"/>
</dbReference>
<dbReference type="CCDS" id="CCDS14653.1">
    <molecule id="Q8N4V1-1"/>
</dbReference>
<dbReference type="RefSeq" id="NP_001316929.1">
    <molecule id="Q8N4V1-1"/>
    <property type="nucleotide sequence ID" value="NM_001330000.2"/>
</dbReference>
<dbReference type="RefSeq" id="NP_775741.1">
    <molecule id="Q8N4V1-1"/>
    <property type="nucleotide sequence ID" value="NM_173470.3"/>
</dbReference>
<dbReference type="PDB" id="6WW7">
    <property type="method" value="EM"/>
    <property type="resolution" value="3.40 A"/>
    <property type="chains" value="E=1-131"/>
</dbReference>
<dbReference type="PDB" id="6Z3W">
    <property type="method" value="EM"/>
    <property type="resolution" value="6.40 A"/>
    <property type="chains" value="E=1-131"/>
</dbReference>
<dbReference type="PDB" id="7ADO">
    <property type="method" value="EM"/>
    <property type="resolution" value="3.39 A"/>
    <property type="chains" value="E=1-131"/>
</dbReference>
<dbReference type="PDB" id="7ADP">
    <property type="method" value="EM"/>
    <property type="resolution" value="3.60 A"/>
    <property type="chains" value="E=1-131"/>
</dbReference>
<dbReference type="PDB" id="8EOI">
    <property type="method" value="EM"/>
    <property type="resolution" value="3.40 A"/>
    <property type="chains" value="E=3-103"/>
</dbReference>
<dbReference type="PDB" id="8J0N">
    <property type="method" value="EM"/>
    <property type="resolution" value="3.47 A"/>
    <property type="chains" value="E=1-131"/>
</dbReference>
<dbReference type="PDB" id="8J0O">
    <property type="method" value="EM"/>
    <property type="resolution" value="3.32 A"/>
    <property type="chains" value="E=1-131"/>
</dbReference>
<dbReference type="PDB" id="8S9S">
    <property type="method" value="EM"/>
    <property type="resolution" value="3.60 A"/>
    <property type="chains" value="5=1-131"/>
</dbReference>
<dbReference type="PDB" id="9C7V">
    <property type="method" value="EM"/>
    <property type="resolution" value="6.60 A"/>
    <property type="chains" value="5=1-131"/>
</dbReference>
<dbReference type="PDBsum" id="6WW7"/>
<dbReference type="PDBsum" id="6Z3W"/>
<dbReference type="PDBsum" id="7ADO"/>
<dbReference type="PDBsum" id="7ADP"/>
<dbReference type="PDBsum" id="8EOI"/>
<dbReference type="PDBsum" id="8J0N"/>
<dbReference type="PDBsum" id="8J0O"/>
<dbReference type="PDBsum" id="8S9S"/>
<dbReference type="PDBsum" id="9C7V"/>
<dbReference type="EMDB" id="EMD-11732"/>
<dbReference type="EMDB" id="EMD-11733"/>
<dbReference type="EMDB" id="EMD-21929"/>
<dbReference type="EMDB" id="EMD-28376"/>
<dbReference type="EMDB" id="EMD-35906"/>
<dbReference type="EMDB" id="EMD-35907"/>
<dbReference type="EMDB" id="EMD-40245"/>
<dbReference type="EMDB" id="EMD-40246"/>
<dbReference type="EMDB" id="EMD-45295"/>
<dbReference type="SMR" id="Q8N4V1"/>
<dbReference type="BioGRID" id="125021">
    <property type="interactions" value="409"/>
</dbReference>
<dbReference type="ComplexPortal" id="CPX-5848">
    <property type="entry name" value="Endoplasmic reticulum membrane complex, EMC8 variant"/>
</dbReference>
<dbReference type="ComplexPortal" id="CPX-5881">
    <property type="entry name" value="Endoplasmic reticulum membrane complex, EMC9 variant"/>
</dbReference>
<dbReference type="CORUM" id="Q8N4V1"/>
<dbReference type="FunCoup" id="Q8N4V1">
    <property type="interactions" value="1136"/>
</dbReference>
<dbReference type="IntAct" id="Q8N4V1">
    <property type="interactions" value="195"/>
</dbReference>
<dbReference type="MINT" id="Q8N4V1"/>
<dbReference type="STRING" id="9606.ENSP00000306220"/>
<dbReference type="TCDB" id="3.A.27.1.1">
    <property type="family name" value="the endoplasmic reticulum membrane protein insertion complex (emc) family"/>
</dbReference>
<dbReference type="GlyGen" id="Q8N4V1">
    <property type="glycosylation" value="1 site, 3 N-linked glycans (1 site)"/>
</dbReference>
<dbReference type="iPTMnet" id="Q8N4V1"/>
<dbReference type="PhosphoSitePlus" id="Q8N4V1"/>
<dbReference type="SwissPalm" id="Q8N4V1"/>
<dbReference type="BioMuta" id="MMGT1"/>
<dbReference type="DMDM" id="74751006"/>
<dbReference type="jPOST" id="Q8N4V1"/>
<dbReference type="MassIVE" id="Q8N4V1"/>
<dbReference type="PaxDb" id="9606-ENSP00000306220"/>
<dbReference type="PeptideAtlas" id="Q8N4V1"/>
<dbReference type="ProteomicsDB" id="71978">
    <molecule id="Q8N4V1-1"/>
</dbReference>
<dbReference type="ProteomicsDB" id="71979">
    <molecule id="Q8N4V1-2"/>
</dbReference>
<dbReference type="Pumba" id="Q8N4V1"/>
<dbReference type="TopDownProteomics" id="Q8N4V1-1">
    <molecule id="Q8N4V1-1"/>
</dbReference>
<dbReference type="Antibodypedia" id="51536">
    <property type="antibodies" value="125 antibodies from 16 providers"/>
</dbReference>
<dbReference type="DNASU" id="93380"/>
<dbReference type="Ensembl" id="ENST00000305963.3">
    <molecule id="Q8N4V1-1"/>
    <property type="protein sequence ID" value="ENSP00000306220.2"/>
    <property type="gene ID" value="ENSG00000169446.6"/>
</dbReference>
<dbReference type="Ensembl" id="ENST00000679621.1">
    <molecule id="Q8N4V1-1"/>
    <property type="protein sequence ID" value="ENSP00000505226.1"/>
    <property type="gene ID" value="ENSG00000169446.6"/>
</dbReference>
<dbReference type="GeneID" id="93380"/>
<dbReference type="KEGG" id="hsa:93380"/>
<dbReference type="MANE-Select" id="ENST00000305963.3">
    <property type="protein sequence ID" value="ENSP00000306220.2"/>
    <property type="RefSeq nucleotide sequence ID" value="NM_173470.3"/>
    <property type="RefSeq protein sequence ID" value="NP_775741.1"/>
</dbReference>
<dbReference type="UCSC" id="uc004ezi.2">
    <molecule id="Q8N4V1-1"/>
    <property type="organism name" value="human"/>
</dbReference>
<dbReference type="AGR" id="HGNC:28100"/>
<dbReference type="CTD" id="93380"/>
<dbReference type="GeneCards" id="MMGT1"/>
<dbReference type="HGNC" id="HGNC:28100">
    <property type="gene designation" value="MMGT1"/>
</dbReference>
<dbReference type="HPA" id="ENSG00000169446">
    <property type="expression patterns" value="Low tissue specificity"/>
</dbReference>
<dbReference type="MIM" id="301098">
    <property type="type" value="gene"/>
</dbReference>
<dbReference type="neXtProt" id="NX_Q8N4V1"/>
<dbReference type="OpenTargets" id="ENSG00000169446"/>
<dbReference type="PharmGKB" id="PA164723074"/>
<dbReference type="VEuPathDB" id="HostDB:ENSG00000169446"/>
<dbReference type="eggNOG" id="KOG3918">
    <property type="taxonomic scope" value="Eukaryota"/>
</dbReference>
<dbReference type="GeneTree" id="ENSGT00510000047104"/>
<dbReference type="HOGENOM" id="CLU_122437_1_0_1"/>
<dbReference type="InParanoid" id="Q8N4V1"/>
<dbReference type="OMA" id="CYGIVHL"/>
<dbReference type="OrthoDB" id="44756at2759"/>
<dbReference type="PAN-GO" id="Q8N4V1">
    <property type="GO annotations" value="5 GO annotations based on evolutionary models"/>
</dbReference>
<dbReference type="PhylomeDB" id="Q8N4V1"/>
<dbReference type="TreeFam" id="TF323267"/>
<dbReference type="PathwayCommons" id="Q8N4V1"/>
<dbReference type="Reactome" id="R-HSA-5223345">
    <property type="pathway name" value="Miscellaneous transport and binding events"/>
</dbReference>
<dbReference type="SignaLink" id="Q8N4V1"/>
<dbReference type="BioGRID-ORCS" id="93380">
    <property type="hits" value="148 hits in 792 CRISPR screens"/>
</dbReference>
<dbReference type="ChiTaRS" id="MMGT1">
    <property type="organism name" value="human"/>
</dbReference>
<dbReference type="GenomeRNAi" id="93380"/>
<dbReference type="Pharos" id="Q8N4V1">
    <property type="development level" value="Tbio"/>
</dbReference>
<dbReference type="PRO" id="PR:Q8N4V1"/>
<dbReference type="Proteomes" id="UP000005640">
    <property type="component" value="Chromosome X"/>
</dbReference>
<dbReference type="RNAct" id="Q8N4V1">
    <property type="molecule type" value="protein"/>
</dbReference>
<dbReference type="Bgee" id="ENSG00000169446">
    <property type="expression patterns" value="Expressed in secondary oocyte and 192 other cell types or tissues"/>
</dbReference>
<dbReference type="GO" id="GO:0005769">
    <property type="term" value="C:early endosome"/>
    <property type="evidence" value="ECO:0000250"/>
    <property type="project" value="UniProtKB"/>
</dbReference>
<dbReference type="GO" id="GO:0031901">
    <property type="term" value="C:early endosome membrane"/>
    <property type="evidence" value="ECO:0007669"/>
    <property type="project" value="UniProtKB-SubCell"/>
</dbReference>
<dbReference type="GO" id="GO:0072546">
    <property type="term" value="C:EMC complex"/>
    <property type="evidence" value="ECO:0000314"/>
    <property type="project" value="UniProtKB"/>
</dbReference>
<dbReference type="GO" id="GO:0005789">
    <property type="term" value="C:endoplasmic reticulum membrane"/>
    <property type="evidence" value="ECO:0000314"/>
    <property type="project" value="UniProtKB"/>
</dbReference>
<dbReference type="GO" id="GO:0005794">
    <property type="term" value="C:Golgi apparatus"/>
    <property type="evidence" value="ECO:0000250"/>
    <property type="project" value="UniProtKB"/>
</dbReference>
<dbReference type="GO" id="GO:0000139">
    <property type="term" value="C:Golgi membrane"/>
    <property type="evidence" value="ECO:0007669"/>
    <property type="project" value="UniProtKB-SubCell"/>
</dbReference>
<dbReference type="GO" id="GO:0016020">
    <property type="term" value="C:membrane"/>
    <property type="evidence" value="ECO:0000314"/>
    <property type="project" value="UniProtKB"/>
</dbReference>
<dbReference type="GO" id="GO:0005886">
    <property type="term" value="C:plasma membrane"/>
    <property type="evidence" value="ECO:0000318"/>
    <property type="project" value="GO_Central"/>
</dbReference>
<dbReference type="GO" id="GO:0015087">
    <property type="term" value="F:cobalt ion transmembrane transporter activity"/>
    <property type="evidence" value="ECO:0007669"/>
    <property type="project" value="Ensembl"/>
</dbReference>
<dbReference type="GO" id="GO:0015093">
    <property type="term" value="F:ferrous iron transmembrane transporter activity"/>
    <property type="evidence" value="ECO:0007669"/>
    <property type="project" value="Ensembl"/>
</dbReference>
<dbReference type="GO" id="GO:0022890">
    <property type="term" value="F:inorganic cation transmembrane transporter activity"/>
    <property type="evidence" value="ECO:0000318"/>
    <property type="project" value="GO_Central"/>
</dbReference>
<dbReference type="GO" id="GO:0015095">
    <property type="term" value="F:magnesium ion transmembrane transporter activity"/>
    <property type="evidence" value="ECO:0000250"/>
    <property type="project" value="UniProtKB"/>
</dbReference>
<dbReference type="GO" id="GO:0006825">
    <property type="term" value="P:copper ion transport"/>
    <property type="evidence" value="ECO:0007669"/>
    <property type="project" value="Ensembl"/>
</dbReference>
<dbReference type="GO" id="GO:0015693">
    <property type="term" value="P:magnesium ion transport"/>
    <property type="evidence" value="ECO:0000250"/>
    <property type="project" value="UniProtKB"/>
</dbReference>
<dbReference type="GO" id="GO:0045050">
    <property type="term" value="P:protein insertion into ER membrane by stop-transfer membrane-anchor sequence"/>
    <property type="evidence" value="ECO:0000314"/>
    <property type="project" value="ComplexPortal"/>
</dbReference>
<dbReference type="GO" id="GO:0071816">
    <property type="term" value="P:tail-anchored membrane protein insertion into ER membrane"/>
    <property type="evidence" value="ECO:0000314"/>
    <property type="project" value="ComplexPortal"/>
</dbReference>
<dbReference type="InterPro" id="IPR018937">
    <property type="entry name" value="MMgT"/>
</dbReference>
<dbReference type="PANTHER" id="PTHR21181">
    <property type="match status" value="1"/>
</dbReference>
<dbReference type="PANTHER" id="PTHR21181:SF7">
    <property type="entry name" value="ER MEMBRANE PROTEIN COMPLEX SUBUNIT 5"/>
    <property type="match status" value="1"/>
</dbReference>
<dbReference type="Pfam" id="PF10270">
    <property type="entry name" value="MMgT"/>
    <property type="match status" value="1"/>
</dbReference>
<gene>
    <name evidence="12" type="primary">MMGT1</name>
    <name evidence="9" type="synonym">EMC5</name>
    <name evidence="12" type="synonym">TMEM32</name>
</gene>
<organism>
    <name type="scientific">Homo sapiens</name>
    <name type="common">Human</name>
    <dbReference type="NCBI Taxonomy" id="9606"/>
    <lineage>
        <taxon>Eukaryota</taxon>
        <taxon>Metazoa</taxon>
        <taxon>Chordata</taxon>
        <taxon>Craniata</taxon>
        <taxon>Vertebrata</taxon>
        <taxon>Euteleostomi</taxon>
        <taxon>Mammalia</taxon>
        <taxon>Eutheria</taxon>
        <taxon>Euarchontoglires</taxon>
        <taxon>Primates</taxon>
        <taxon>Haplorrhini</taxon>
        <taxon>Catarrhini</taxon>
        <taxon>Hominidae</taxon>
        <taxon>Homo</taxon>
    </lineage>
</organism>
<proteinExistence type="evidence at protein level"/>
<sequence length="131" mass="14686">MAPSLWKGLVGIGLFALAHAAFSAAQHRSYMRLTEKEDESLPIDIVLQTLLAFAVTCYGIVHIAGEFKDMDATSELKNKTFDTLRNHPSFYVFNHRGRVLFRPSDTANSSNQDALSSNTSLKLRKLESLRR</sequence>
<keyword id="KW-0002">3D-structure</keyword>
<keyword id="KW-0025">Alternative splicing</keyword>
<keyword id="KW-0256">Endoplasmic reticulum</keyword>
<keyword id="KW-0967">Endosome</keyword>
<keyword id="KW-0333">Golgi apparatus</keyword>
<keyword id="KW-0460">Magnesium</keyword>
<keyword id="KW-0472">Membrane</keyword>
<keyword id="KW-0597">Phosphoprotein</keyword>
<keyword id="KW-1267">Proteomics identification</keyword>
<keyword id="KW-1185">Reference proteome</keyword>
<keyword id="KW-0812">Transmembrane</keyword>
<keyword id="KW-1133">Transmembrane helix</keyword>
<keyword id="KW-0813">Transport</keyword>
<comment type="function">
    <text evidence="1 3 4 5 6 7">Part of the endoplasmic reticulum membrane protein complex (EMC) that enables the energy-independent insertion into endoplasmic reticulum membranes of newly synthesized membrane proteins (PubMed:29242231, PubMed:29809151, PubMed:30415835, PubMed:32439656, PubMed:32459176). Preferentially accommodates proteins with transmembrane domains that are weakly hydrophobic or contain destabilizing features such as charged and aromatic residues (PubMed:29242231, PubMed:29809151, PubMed:30415835). Involved in the cotranslational insertion of multi-pass membrane proteins in which stop-transfer membrane-anchor sequences become ER membrane spanning helices (PubMed:29809151, PubMed:30415835). It is also required for the post-translational insertion of tail-anchored/TA proteins in endoplasmic reticulum membranes (PubMed:29242231, PubMed:29809151). By mediating the proper cotranslational insertion of N-terminal transmembrane domains in an N-exo topology, with translocated N-terminus in the lumen of the ER, controls the topology of multi-pass membrane proteins like the G protein-coupled receptors (PubMed:30415835). By regulating the insertion of various proteins in membranes, it is indirectly involved in many cellular processes (By similarity). May be involved in Mg(2+) transport (By similarity).</text>
</comment>
<comment type="subunit">
    <text evidence="2 3 6 7">Component of the ER membrane protein complex (EMC).</text>
</comment>
<comment type="interaction">
    <interactant intactId="EBI-6163737">
        <id>Q8N4V1</id>
    </interactant>
    <interactant intactId="EBI-11277970">
        <id>Q9UHX3</id>
        <label>ADGRE2</label>
    </interactant>
    <organismsDiffer>false</organismsDiffer>
    <experiments>3</experiments>
</comment>
<comment type="interaction">
    <interactant intactId="EBI-6163737">
        <id>Q8N4V1</id>
    </interactant>
    <interactant intactId="EBI-3925742">
        <id>Q8TD06</id>
        <label>AGR3</label>
    </interactant>
    <organismsDiffer>false</organismsDiffer>
    <experiments>3</experiments>
</comment>
<comment type="interaction">
    <interactant intactId="EBI-6163737">
        <id>Q8N4V1</id>
    </interactant>
    <interactant intactId="EBI-12109402">
        <id>Q86W74-2</id>
        <label>ANKRD46</label>
    </interactant>
    <organismsDiffer>false</organismsDiffer>
    <experiments>3</experiments>
</comment>
<comment type="interaction">
    <interactant intactId="EBI-6163737">
        <id>Q8N4V1</id>
    </interactant>
    <interactant intactId="EBI-12003442">
        <id>Q8WVX3-2</id>
        <label>C4orf3</label>
    </interactant>
    <organismsDiffer>false</organismsDiffer>
    <experiments>3</experiments>
</comment>
<comment type="interaction">
    <interactant intactId="EBI-6163737">
        <id>Q8N4V1</id>
    </interactant>
    <interactant intactId="EBI-8558308">
        <id>P01031</id>
        <label>C5</label>
    </interactant>
    <organismsDiffer>false</organismsDiffer>
    <experiments>3</experiments>
</comment>
<comment type="interaction">
    <interactant intactId="EBI-6163737">
        <id>Q8N4V1</id>
    </interactant>
    <interactant intactId="EBI-9021639">
        <id>P07357</id>
        <label>C8A</label>
    </interactant>
    <organismsDiffer>false</organismsDiffer>
    <experiments>3</experiments>
</comment>
<comment type="interaction">
    <interactant intactId="EBI-6163737">
        <id>Q8N4V1</id>
    </interactant>
    <interactant intactId="EBI-10305240">
        <id>Q9H1M4</id>
        <label>DEFB127</label>
    </interactant>
    <organismsDiffer>false</organismsDiffer>
    <experiments>3</experiments>
</comment>
<comment type="interaction">
    <interactant intactId="EBI-6163737">
        <id>Q8N4V1</id>
    </interactant>
    <interactant intactId="EBI-359031">
        <id>Q15006</id>
        <label>EMC2</label>
    </interactant>
    <organismsDiffer>false</organismsDiffer>
    <experiments>13</experiments>
</comment>
<comment type="interaction">
    <interactant intactId="EBI-6163737">
        <id>Q8N4V1</id>
    </interactant>
    <interactant intactId="EBI-2820492">
        <id>Q9BV81</id>
        <label>EMC6</label>
    </interactant>
    <organismsDiffer>false</organismsDiffer>
    <experiments>8</experiments>
</comment>
<comment type="interaction">
    <interactant intactId="EBI-6163737">
        <id>Q8N4V1</id>
    </interactant>
    <interactant intactId="EBI-489887">
        <id>P50402</id>
        <label>EMD</label>
    </interactant>
    <organismsDiffer>false</organismsDiffer>
    <experiments>3</experiments>
</comment>
<comment type="interaction">
    <interactant intactId="EBI-6163737">
        <id>Q8N4V1</id>
    </interactant>
    <interactant intactId="EBI-3385283">
        <id>Q9Y3D6</id>
        <label>FIS1</label>
    </interactant>
    <organismsDiffer>false</organismsDiffer>
    <experiments>3</experiments>
</comment>
<comment type="interaction">
    <interactant intactId="EBI-6163737">
        <id>Q8N4V1</id>
    </interactant>
    <interactant intactId="EBI-713304">
        <id>Q9H0Q3</id>
        <label>FXYD6</label>
    </interactant>
    <organismsDiffer>false</organismsDiffer>
    <experiments>3</experiments>
</comment>
<comment type="interaction">
    <interactant intactId="EBI-6163737">
        <id>Q8N4V1</id>
    </interactant>
    <interactant intactId="EBI-4401517">
        <id>O14653</id>
        <label>GOSR2</label>
    </interactant>
    <organismsDiffer>false</organismsDiffer>
    <experiments>3</experiments>
</comment>
<comment type="interaction">
    <interactant intactId="EBI-6163737">
        <id>Q8N4V1</id>
    </interactant>
    <interactant intactId="EBI-10178951">
        <id>O00155</id>
        <label>GPR25</label>
    </interactant>
    <organismsDiffer>false</organismsDiffer>
    <experiments>3</experiments>
</comment>
<comment type="interaction">
    <interactant intactId="EBI-6163737">
        <id>Q8N4V1</id>
    </interactant>
    <interactant intactId="EBI-10232876">
        <id>Q14416</id>
        <label>GRM2</label>
    </interactant>
    <organismsDiffer>false</organismsDiffer>
    <experiments>3</experiments>
</comment>
<comment type="interaction">
    <interactant intactId="EBI-6163737">
        <id>Q8N4V1</id>
    </interactant>
    <interactant intactId="EBI-8503746">
        <id>Q9Y5U4</id>
        <label>INSIG2</label>
    </interactant>
    <organismsDiffer>false</organismsDiffer>
    <experiments>3</experiments>
</comment>
<comment type="interaction">
    <interactant intactId="EBI-6163737">
        <id>Q8N4V1</id>
    </interactant>
    <interactant intactId="EBI-2568251">
        <id>P11215</id>
        <label>ITGAM</label>
    </interactant>
    <organismsDiffer>false</organismsDiffer>
    <experiments>3</experiments>
</comment>
<comment type="interaction">
    <interactant intactId="EBI-6163737">
        <id>Q8N4V1</id>
    </interactant>
    <interactant intactId="EBI-12133176">
        <id>Q9UIQ6-2</id>
        <label>LNPEP</label>
    </interactant>
    <organismsDiffer>false</organismsDiffer>
    <experiments>3</experiments>
</comment>
<comment type="interaction">
    <interactant intactId="EBI-6163737">
        <id>Q8N4V1</id>
    </interactant>
    <interactant intactId="EBI-11956541">
        <id>Q9GZY8-5</id>
        <label>MFF</label>
    </interactant>
    <organismsDiffer>false</organismsDiffer>
    <experiments>3</experiments>
</comment>
<comment type="interaction">
    <interactant intactId="EBI-6163737">
        <id>Q8N4V1</id>
    </interactant>
    <interactant intactId="EBI-745345">
        <id>Q96ES6</id>
        <label>MFSD3</label>
    </interactant>
    <organismsDiffer>false</organismsDiffer>
    <experiments>3</experiments>
</comment>
<comment type="interaction">
    <interactant intactId="EBI-6163737">
        <id>Q8N4V1</id>
    </interactant>
    <interactant intactId="EBI-3920969">
        <id>Q6N075</id>
        <label>MFSD5</label>
    </interactant>
    <organismsDiffer>false</organismsDiffer>
    <experiments>3</experiments>
</comment>
<comment type="interaction">
    <interactant intactId="EBI-6163737">
        <id>Q8N4V1</id>
    </interactant>
    <interactant intactId="EBI-12070086">
        <id>Q5J8X5</id>
        <label>MS4A13</label>
    </interactant>
    <organismsDiffer>false</organismsDiffer>
    <experiments>3</experiments>
</comment>
<comment type="interaction">
    <interactant intactId="EBI-6163737">
        <id>Q8N4V1</id>
    </interactant>
    <interactant intactId="EBI-1246131">
        <id>O95167</id>
        <label>NDUFA3</label>
    </interactant>
    <organismsDiffer>false</organismsDiffer>
    <experiments>4</experiments>
</comment>
<comment type="interaction">
    <interactant intactId="EBI-6163737">
        <id>Q8N4V1</id>
    </interactant>
    <interactant intactId="EBI-10317425">
        <id>Q9NZG7</id>
        <label>NINJ2</label>
    </interactant>
    <organismsDiffer>false</organismsDiffer>
    <experiments>3</experiments>
</comment>
<comment type="interaction">
    <interactant intactId="EBI-6163737">
        <id>Q8N4V1</id>
    </interactant>
    <interactant intactId="EBI-11075081">
        <id>Q53FV1</id>
        <label>ORMDL2</label>
    </interactant>
    <organismsDiffer>false</organismsDiffer>
    <experiments>3</experiments>
</comment>
<comment type="interaction">
    <interactant intactId="EBI-6163737">
        <id>Q8N4V1</id>
    </interactant>
    <interactant intactId="EBI-981985">
        <id>Q9Y5Y5</id>
        <label>PEX16</label>
    </interactant>
    <organismsDiffer>false</organismsDiffer>
    <experiments>3</experiments>
</comment>
<comment type="interaction">
    <interactant intactId="EBI-6163737">
        <id>Q8N4V1</id>
    </interactant>
    <interactant intactId="EBI-11721828">
        <id>Q8IY26</id>
        <label>PLPP6</label>
    </interactant>
    <organismsDiffer>false</organismsDiffer>
    <experiments>3</experiments>
</comment>
<comment type="interaction">
    <interactant intactId="EBI-6163737">
        <id>Q8N4V1</id>
    </interactant>
    <interactant intactId="EBI-8636004">
        <id>Q96GQ5</id>
        <label>RUSF1</label>
    </interactant>
    <organismsDiffer>false</organismsDiffer>
    <experiments>3</experiments>
</comment>
<comment type="interaction">
    <interactant intactId="EBI-6163737">
        <id>Q8N4V1</id>
    </interactant>
    <interactant intactId="EBI-1058865">
        <id>O75396</id>
        <label>SEC22B</label>
    </interactant>
    <organismsDiffer>false</organismsDiffer>
    <experiments>3</experiments>
</comment>
<comment type="interaction">
    <interactant intactId="EBI-6163737">
        <id>Q8N4V1</id>
    </interactant>
    <interactant intactId="EBI-10281213">
        <id>Q969S0</id>
        <label>SLC35B4</label>
    </interactant>
    <organismsDiffer>false</organismsDiffer>
    <experiments>3</experiments>
</comment>
<comment type="interaction">
    <interactant intactId="EBI-6163737">
        <id>Q8N4V1</id>
    </interactant>
    <interactant intactId="EBI-12867720">
        <id>Q6ICL7</id>
        <label>SLC35E4</label>
    </interactant>
    <organismsDiffer>false</organismsDiffer>
    <experiments>3</experiments>
</comment>
<comment type="interaction">
    <interactant intactId="EBI-6163737">
        <id>Q8N4V1</id>
    </interactant>
    <interactant intactId="EBI-10314552">
        <id>Q9NVC3</id>
        <label>SLC38A7</label>
    </interactant>
    <organismsDiffer>false</organismsDiffer>
    <experiments>3</experiments>
</comment>
<comment type="interaction">
    <interactant intactId="EBI-6163737">
        <id>Q8N4V1</id>
    </interactant>
    <interactant intactId="EBI-5235586">
        <id>Q8TBB6</id>
        <label>SLC7A14</label>
    </interactant>
    <organismsDiffer>false</organismsDiffer>
    <experiments>3</experiments>
</comment>
<comment type="interaction">
    <interactant intactId="EBI-6163737">
        <id>Q8N4V1</id>
    </interactant>
    <interactant intactId="EBI-2691717">
        <id>Q86Y82</id>
        <label>STX12</label>
    </interactant>
    <organismsDiffer>false</organismsDiffer>
    <experiments>3</experiments>
</comment>
<comment type="interaction">
    <interactant intactId="EBI-6163737">
        <id>Q8N4V1</id>
    </interactant>
    <interactant intactId="EBI-712466">
        <id>Q16623</id>
        <label>STX1A</label>
    </interactant>
    <organismsDiffer>false</organismsDiffer>
    <experiments>3</experiments>
</comment>
<comment type="interaction">
    <interactant intactId="EBI-6163737">
        <id>Q8N4V1</id>
    </interactant>
    <interactant intactId="EBI-9071709">
        <id>P61266</id>
        <label>STX1B</label>
    </interactant>
    <organismsDiffer>false</organismsDiffer>
    <experiments>3</experiments>
</comment>
<comment type="interaction">
    <interactant intactId="EBI-6163737">
        <id>Q8N4V1</id>
    </interactant>
    <interactant intactId="EBI-1394295">
        <id>Q13277</id>
        <label>STX3</label>
    </interactant>
    <organismsDiffer>false</organismsDiffer>
    <experiments>3</experiments>
</comment>
<comment type="interaction">
    <interactant intactId="EBI-6163737">
        <id>Q8N4V1</id>
    </interactant>
    <interactant intactId="EBI-2695795">
        <id>O43752</id>
        <label>STX6</label>
    </interactant>
    <organismsDiffer>false</organismsDiffer>
    <experiments>3</experiments>
</comment>
<comment type="interaction">
    <interactant intactId="EBI-6163737">
        <id>Q8N4V1</id>
    </interactant>
    <interactant intactId="EBI-727240">
        <id>Q9UNK0</id>
        <label>STX8</label>
    </interactant>
    <organismsDiffer>false</organismsDiffer>
    <experiments>3</experiments>
</comment>
<comment type="interaction">
    <interactant intactId="EBI-6163737">
        <id>Q8N4V1</id>
    </interactant>
    <interactant intactId="EBI-12847034">
        <id>P59542</id>
        <label>TAS2R19</label>
    </interactant>
    <organismsDiffer>false</organismsDiffer>
    <experiments>3</experiments>
</comment>
<comment type="interaction">
    <interactant intactId="EBI-6163737">
        <id>Q8N4V1</id>
    </interactant>
    <interactant intactId="EBI-2877718">
        <id>Q9NZ01</id>
        <label>TECR</label>
    </interactant>
    <organismsDiffer>false</organismsDiffer>
    <experiments>3</experiments>
</comment>
<comment type="interaction">
    <interactant intactId="EBI-6163737">
        <id>Q8N4V1</id>
    </interactant>
    <interactant intactId="EBI-941422">
        <id>P07204</id>
        <label>THBD</label>
    </interactant>
    <organismsDiffer>false</organismsDiffer>
    <experiments>3</experiments>
</comment>
<comment type="interaction">
    <interactant intactId="EBI-6163737">
        <id>Q8N4V1</id>
    </interactant>
    <interactant intactId="EBI-1045825">
        <id>P55061</id>
        <label>TMBIM6</label>
    </interactant>
    <organismsDiffer>false</organismsDiffer>
    <experiments>3</experiments>
</comment>
<comment type="interaction">
    <interactant intactId="EBI-6163737">
        <id>Q8N4V1</id>
    </interactant>
    <interactant intactId="EBI-11603430">
        <id>Q6PL24</id>
        <label>TMED8</label>
    </interactant>
    <organismsDiffer>false</organismsDiffer>
    <experiments>3</experiments>
</comment>
<comment type="interaction">
    <interactant intactId="EBI-6163737">
        <id>Q8N4V1</id>
    </interactant>
    <interactant intactId="EBI-2800360">
        <id>Q9Y6G1</id>
        <label>TMEM14A</label>
    </interactant>
    <organismsDiffer>false</organismsDiffer>
    <experiments>3</experiments>
</comment>
<comment type="interaction">
    <interactant intactId="EBI-6163737">
        <id>Q8N4V1</id>
    </interactant>
    <interactant intactId="EBI-2339195">
        <id>Q9P0S9</id>
        <label>TMEM14C</label>
    </interactant>
    <organismsDiffer>false</organismsDiffer>
    <experiments>3</experiments>
</comment>
<comment type="interaction">
    <interactant intactId="EBI-6163737">
        <id>Q8N4V1</id>
    </interactant>
    <interactant intactId="EBI-12195227">
        <id>Q8NBD8</id>
        <label>TMEM229B</label>
    </interactant>
    <organismsDiffer>false</organismsDiffer>
    <experiments>3</experiments>
</comment>
<comment type="interaction">
    <interactant intactId="EBI-6163737">
        <id>Q8N4V1</id>
    </interactant>
    <interactant intactId="EBI-11956809">
        <id>Q8TBM7</id>
        <label>TMEM254</label>
    </interactant>
    <organismsDiffer>false</organismsDiffer>
    <experiments>3</experiments>
</comment>
<comment type="interaction">
    <interactant intactId="EBI-6163737">
        <id>Q8N4V1</id>
    </interactant>
    <interactant intactId="EBI-12038591">
        <id>Q69YG0</id>
        <label>TMEM42</label>
    </interactant>
    <organismsDiffer>false</organismsDiffer>
    <experiments>3</experiments>
</comment>
<comment type="interaction">
    <interactant intactId="EBI-6163737">
        <id>Q8N4V1</id>
    </interactant>
    <interactant intactId="EBI-2852148">
        <id>Q9H2L4</id>
        <label>TMEM60</label>
    </interactant>
    <organismsDiffer>false</organismsDiffer>
    <experiments>3</experiments>
</comment>
<comment type="interaction">
    <interactant intactId="EBI-6163737">
        <id>Q8N4V1</id>
    </interactant>
    <interactant intactId="EBI-2548832">
        <id>Q8N661</id>
        <label>TMEM86B</label>
    </interactant>
    <organismsDiffer>false</organismsDiffer>
    <experiments>3</experiments>
</comment>
<comment type="interaction">
    <interactant intactId="EBI-6163737">
        <id>Q8N4V1</id>
    </interactant>
    <interactant intactId="EBI-1207615">
        <id>Q86Y07</id>
        <label>VRK2</label>
    </interactant>
    <organismsDiffer>false</organismsDiffer>
    <experiments>3</experiments>
</comment>
<comment type="interaction">
    <interactant intactId="EBI-6163737">
        <id>Q8N4V1</id>
    </interactant>
    <interactant intactId="EBI-2799703">
        <id>O95070</id>
        <label>YIF1A</label>
    </interactant>
    <organismsDiffer>false</organismsDiffer>
    <experiments>3</experiments>
</comment>
<comment type="subcellular location">
    <subcellularLocation>
        <location evidence="2">Endoplasmic reticulum membrane</location>
        <topology evidence="6 7">Multi-pass membrane protein</topology>
    </subcellularLocation>
    <subcellularLocation>
        <location evidence="1">Golgi apparatus membrane</location>
        <topology evidence="6 7">Multi-pass membrane protein</topology>
    </subcellularLocation>
    <subcellularLocation>
        <location evidence="1">Early endosome membrane</location>
        <topology evidence="6 7">Multi-pass membrane protein</topology>
    </subcellularLocation>
</comment>
<comment type="alternative products">
    <event type="alternative splicing"/>
    <isoform>
        <id>Q8N4V1-1</id>
        <name>1</name>
        <sequence type="displayed"/>
    </isoform>
    <isoform>
        <id>Q8N4V1-2</id>
        <name>2</name>
        <sequence type="described" ref="VSP_036488"/>
    </isoform>
</comment>
<comment type="similarity">
    <text evidence="10">Belongs to the membrane magnesium transporter (TC 1.A.67) family.</text>
</comment>
<protein>
    <recommendedName>
        <fullName evidence="11">ER membrane protein complex subunit 5</fullName>
    </recommendedName>
    <alternativeName>
        <fullName evidence="12">Membrane magnesium transporter 1</fullName>
    </alternativeName>
    <alternativeName>
        <fullName evidence="12">Transmembrane protein 32</fullName>
    </alternativeName>
</protein>
<evidence type="ECO:0000250" key="1">
    <source>
        <dbReference type="UniProtKB" id="Q8K273"/>
    </source>
</evidence>
<evidence type="ECO:0000269" key="2">
    <source>
    </source>
</evidence>
<evidence type="ECO:0000269" key="3">
    <source>
    </source>
</evidence>
<evidence type="ECO:0000269" key="4">
    <source>
    </source>
</evidence>
<evidence type="ECO:0000269" key="5">
    <source>
    </source>
</evidence>
<evidence type="ECO:0000269" key="6">
    <source>
    </source>
</evidence>
<evidence type="ECO:0000269" key="7">
    <source>
    </source>
</evidence>
<evidence type="ECO:0000303" key="8">
    <source>
    </source>
</evidence>
<evidence type="ECO:0000303" key="9">
    <source>
    </source>
</evidence>
<evidence type="ECO:0000305" key="10"/>
<evidence type="ECO:0000305" key="11">
    <source>
    </source>
</evidence>
<evidence type="ECO:0000312" key="12">
    <source>
        <dbReference type="HGNC" id="HGNC:28100"/>
    </source>
</evidence>
<evidence type="ECO:0007744" key="13">
    <source>
        <dbReference type="PDB" id="6WW7"/>
    </source>
</evidence>
<evidence type="ECO:0007744" key="14">
    <source>
        <dbReference type="PDB" id="6Z3W"/>
    </source>
</evidence>
<evidence type="ECO:0007744" key="15">
    <source>
    </source>
</evidence>
<evidence type="ECO:0007829" key="16">
    <source>
        <dbReference type="PDB" id="7ADO"/>
    </source>
</evidence>
<evidence type="ECO:0007829" key="17">
    <source>
        <dbReference type="PDB" id="8J0O"/>
    </source>
</evidence>
<accession>Q8N4V1</accession>
<accession>B2R625</accession>
<accession>B4DIY3</accession>
<accession>D3DWG7</accession>
<accession>Q5JPP7</accession>